<name>MIAA_FRATN</name>
<accession>A0Q6S4</accession>
<gene>
    <name evidence="1" type="primary">miaA</name>
    <name type="ordered locus">FTN_1052</name>
</gene>
<reference key="1">
    <citation type="journal article" date="2007" name="Genome Biol.">
        <title>Comparison of Francisella tularensis genomes reveals evolutionary events associated with the emergence of human pathogenic strains.</title>
        <authorList>
            <person name="Rohmer L."/>
            <person name="Fong C."/>
            <person name="Abmayr S."/>
            <person name="Wasnick M."/>
            <person name="Larson Freeman T.J."/>
            <person name="Radey M."/>
            <person name="Guina T."/>
            <person name="Svensson K."/>
            <person name="Hayden H.S."/>
            <person name="Jacobs M."/>
            <person name="Gallagher L.A."/>
            <person name="Manoil C."/>
            <person name="Ernst R.K."/>
            <person name="Drees B."/>
            <person name="Buckley D."/>
            <person name="Haugen E."/>
            <person name="Bovee D."/>
            <person name="Zhou Y."/>
            <person name="Chang J."/>
            <person name="Levy R."/>
            <person name="Lim R."/>
            <person name="Gillett W."/>
            <person name="Guenthener D."/>
            <person name="Kang A."/>
            <person name="Shaffer S.A."/>
            <person name="Taylor G."/>
            <person name="Chen J."/>
            <person name="Gallis B."/>
            <person name="D'Argenio D.A."/>
            <person name="Forsman M."/>
            <person name="Olson M.V."/>
            <person name="Goodlett D.R."/>
            <person name="Kaul R."/>
            <person name="Miller S.I."/>
            <person name="Brittnacher M.J."/>
        </authorList>
    </citation>
    <scope>NUCLEOTIDE SEQUENCE [LARGE SCALE GENOMIC DNA]</scope>
    <source>
        <strain>U112</strain>
    </source>
</reference>
<proteinExistence type="inferred from homology"/>
<evidence type="ECO:0000255" key="1">
    <source>
        <dbReference type="HAMAP-Rule" id="MF_00185"/>
    </source>
</evidence>
<keyword id="KW-0067">ATP-binding</keyword>
<keyword id="KW-0460">Magnesium</keyword>
<keyword id="KW-0547">Nucleotide-binding</keyword>
<keyword id="KW-0808">Transferase</keyword>
<keyword id="KW-0819">tRNA processing</keyword>
<comment type="function">
    <text evidence="1">Catalyzes the transfer of a dimethylallyl group onto the adenine at position 37 in tRNAs that read codons beginning with uridine, leading to the formation of N6-(dimethylallyl)adenosine (i(6)A).</text>
</comment>
<comment type="catalytic activity">
    <reaction evidence="1">
        <text>adenosine(37) in tRNA + dimethylallyl diphosphate = N(6)-dimethylallyladenosine(37) in tRNA + diphosphate</text>
        <dbReference type="Rhea" id="RHEA:26482"/>
        <dbReference type="Rhea" id="RHEA-COMP:10162"/>
        <dbReference type="Rhea" id="RHEA-COMP:10375"/>
        <dbReference type="ChEBI" id="CHEBI:33019"/>
        <dbReference type="ChEBI" id="CHEBI:57623"/>
        <dbReference type="ChEBI" id="CHEBI:74411"/>
        <dbReference type="ChEBI" id="CHEBI:74415"/>
        <dbReference type="EC" id="2.5.1.75"/>
    </reaction>
</comment>
<comment type="cofactor">
    <cofactor evidence="1">
        <name>Mg(2+)</name>
        <dbReference type="ChEBI" id="CHEBI:18420"/>
    </cofactor>
</comment>
<comment type="subunit">
    <text evidence="1">Monomer.</text>
</comment>
<comment type="similarity">
    <text evidence="1">Belongs to the IPP transferase family.</text>
</comment>
<protein>
    <recommendedName>
        <fullName evidence="1">tRNA dimethylallyltransferase</fullName>
        <ecNumber evidence="1">2.5.1.75</ecNumber>
    </recommendedName>
    <alternativeName>
        <fullName evidence="1">Dimethylallyl diphosphate:tRNA dimethylallyltransferase</fullName>
        <shortName evidence="1">DMAPP:tRNA dimethylallyltransferase</shortName>
        <shortName evidence="1">DMATase</shortName>
    </alternativeName>
    <alternativeName>
        <fullName evidence="1">Isopentenyl-diphosphate:tRNA isopentenyltransferase</fullName>
        <shortName evidence="1">IPP transferase</shortName>
        <shortName evidence="1">IPPT</shortName>
        <shortName evidence="1">IPTase</shortName>
    </alternativeName>
</protein>
<dbReference type="EC" id="2.5.1.75" evidence="1"/>
<dbReference type="EMBL" id="CP000439">
    <property type="protein sequence ID" value="ABK89939.1"/>
    <property type="molecule type" value="Genomic_DNA"/>
</dbReference>
<dbReference type="RefSeq" id="WP_003039547.1">
    <property type="nucleotide sequence ID" value="NC_008601.1"/>
</dbReference>
<dbReference type="SMR" id="A0Q6S4"/>
<dbReference type="KEGG" id="ftn:FTN_1052"/>
<dbReference type="KEGG" id="ftx:AW25_956"/>
<dbReference type="BioCyc" id="FTUL401614:G1G75-1095-MONOMER"/>
<dbReference type="Proteomes" id="UP000000762">
    <property type="component" value="Chromosome"/>
</dbReference>
<dbReference type="GO" id="GO:0005524">
    <property type="term" value="F:ATP binding"/>
    <property type="evidence" value="ECO:0007669"/>
    <property type="project" value="UniProtKB-UniRule"/>
</dbReference>
<dbReference type="GO" id="GO:0052381">
    <property type="term" value="F:tRNA dimethylallyltransferase activity"/>
    <property type="evidence" value="ECO:0007669"/>
    <property type="project" value="UniProtKB-UniRule"/>
</dbReference>
<dbReference type="GO" id="GO:0006400">
    <property type="term" value="P:tRNA modification"/>
    <property type="evidence" value="ECO:0007669"/>
    <property type="project" value="TreeGrafter"/>
</dbReference>
<dbReference type="FunFam" id="1.10.20.140:FF:000001">
    <property type="entry name" value="tRNA dimethylallyltransferase"/>
    <property type="match status" value="1"/>
</dbReference>
<dbReference type="Gene3D" id="1.10.20.140">
    <property type="match status" value="1"/>
</dbReference>
<dbReference type="Gene3D" id="3.40.50.300">
    <property type="entry name" value="P-loop containing nucleotide triphosphate hydrolases"/>
    <property type="match status" value="1"/>
</dbReference>
<dbReference type="HAMAP" id="MF_00185">
    <property type="entry name" value="IPP_trans"/>
    <property type="match status" value="1"/>
</dbReference>
<dbReference type="InterPro" id="IPR039657">
    <property type="entry name" value="Dimethylallyltransferase"/>
</dbReference>
<dbReference type="InterPro" id="IPR018022">
    <property type="entry name" value="IPT"/>
</dbReference>
<dbReference type="InterPro" id="IPR027417">
    <property type="entry name" value="P-loop_NTPase"/>
</dbReference>
<dbReference type="NCBIfam" id="TIGR00174">
    <property type="entry name" value="miaA"/>
    <property type="match status" value="1"/>
</dbReference>
<dbReference type="PANTHER" id="PTHR11088">
    <property type="entry name" value="TRNA DIMETHYLALLYLTRANSFERASE"/>
    <property type="match status" value="1"/>
</dbReference>
<dbReference type="PANTHER" id="PTHR11088:SF60">
    <property type="entry name" value="TRNA DIMETHYLALLYLTRANSFERASE"/>
    <property type="match status" value="1"/>
</dbReference>
<dbReference type="Pfam" id="PF01715">
    <property type="entry name" value="IPPT"/>
    <property type="match status" value="1"/>
</dbReference>
<dbReference type="SUPFAM" id="SSF52540">
    <property type="entry name" value="P-loop containing nucleoside triphosphate hydrolases"/>
    <property type="match status" value="2"/>
</dbReference>
<organism>
    <name type="scientific">Francisella tularensis subsp. novicida (strain U112)</name>
    <dbReference type="NCBI Taxonomy" id="401614"/>
    <lineage>
        <taxon>Bacteria</taxon>
        <taxon>Pseudomonadati</taxon>
        <taxon>Pseudomonadota</taxon>
        <taxon>Gammaproteobacteria</taxon>
        <taxon>Thiotrichales</taxon>
        <taxon>Francisellaceae</taxon>
        <taxon>Francisella</taxon>
    </lineage>
</organism>
<sequence>MSKLIYGLAGPTASGKTSLSILLAKKINAEIISVDSSLVYKGMDIGTAKPTLQEQDGIKHHLIDIIEPTGNFSVADFISSVNKLKKEIWARGREVLLVGGTMLYFKGLIEGLSALPESQAEIREALEYQKKAKGLQYLHQQLSEIDPQSAQKINPNDQQRIFRALEVIMISGKKYSELVKTSKVGGLDEELKLCALVPNDRSILHKNIESRFRQMLDQGFLDEVQNLRKNRMLTKETTAIRSVGYRQAWEYLDGDISYDEFVKKGIVATRQLAKRQLTWIRNWQSSINIVAMENETKELDILKYFGYK</sequence>
<feature type="chain" id="PRO_1000020601" description="tRNA dimethylallyltransferase">
    <location>
        <begin position="1"/>
        <end position="308"/>
    </location>
</feature>
<feature type="region of interest" description="Interaction with substrate tRNA" evidence="1">
    <location>
        <begin position="35"/>
        <end position="38"/>
    </location>
</feature>
<feature type="region of interest" description="Interaction with substrate tRNA" evidence="1">
    <location>
        <begin position="159"/>
        <end position="163"/>
    </location>
</feature>
<feature type="binding site" evidence="1">
    <location>
        <begin position="10"/>
        <end position="17"/>
    </location>
    <ligand>
        <name>ATP</name>
        <dbReference type="ChEBI" id="CHEBI:30616"/>
    </ligand>
</feature>
<feature type="binding site" evidence="1">
    <location>
        <begin position="12"/>
        <end position="17"/>
    </location>
    <ligand>
        <name>substrate</name>
    </ligand>
</feature>
<feature type="site" description="Interaction with substrate tRNA" evidence="1">
    <location>
        <position position="101"/>
    </location>
</feature>
<feature type="site" description="Interaction with substrate tRNA" evidence="1">
    <location>
        <position position="123"/>
    </location>
</feature>